<name>TSAC_PSEPW</name>
<reference key="1">
    <citation type="submission" date="2008-02" db="EMBL/GenBank/DDBJ databases">
        <title>Complete sequence of Pseudomonas putida W619.</title>
        <authorList>
            <person name="Copeland A."/>
            <person name="Lucas S."/>
            <person name="Lapidus A."/>
            <person name="Barry K."/>
            <person name="Detter J.C."/>
            <person name="Glavina del Rio T."/>
            <person name="Dalin E."/>
            <person name="Tice H."/>
            <person name="Pitluck S."/>
            <person name="Chain P."/>
            <person name="Malfatti S."/>
            <person name="Shin M."/>
            <person name="Vergez L."/>
            <person name="Schmutz J."/>
            <person name="Larimer F."/>
            <person name="Land M."/>
            <person name="Hauser L."/>
            <person name="Kyrpides N."/>
            <person name="Kim E."/>
            <person name="Taghavi S."/>
            <person name="Vangronsveld D."/>
            <person name="van der Lelie D."/>
            <person name="Richardson P."/>
        </authorList>
    </citation>
    <scope>NUCLEOTIDE SEQUENCE [LARGE SCALE GENOMIC DNA]</scope>
    <source>
        <strain>W619</strain>
    </source>
</reference>
<dbReference type="EC" id="2.7.7.87" evidence="1"/>
<dbReference type="EMBL" id="CP000949">
    <property type="protein sequence ID" value="ACA70595.1"/>
    <property type="molecule type" value="Genomic_DNA"/>
</dbReference>
<dbReference type="SMR" id="B1J499"/>
<dbReference type="STRING" id="390235.PputW619_0089"/>
<dbReference type="KEGG" id="ppw:PputW619_0089"/>
<dbReference type="eggNOG" id="COG0009">
    <property type="taxonomic scope" value="Bacteria"/>
</dbReference>
<dbReference type="HOGENOM" id="CLU_031397_6_0_6"/>
<dbReference type="OrthoDB" id="9814580at2"/>
<dbReference type="GO" id="GO:0005737">
    <property type="term" value="C:cytoplasm"/>
    <property type="evidence" value="ECO:0007669"/>
    <property type="project" value="UniProtKB-SubCell"/>
</dbReference>
<dbReference type="GO" id="GO:0005524">
    <property type="term" value="F:ATP binding"/>
    <property type="evidence" value="ECO:0007669"/>
    <property type="project" value="UniProtKB-UniRule"/>
</dbReference>
<dbReference type="GO" id="GO:0003725">
    <property type="term" value="F:double-stranded RNA binding"/>
    <property type="evidence" value="ECO:0007669"/>
    <property type="project" value="InterPro"/>
</dbReference>
<dbReference type="GO" id="GO:0061710">
    <property type="term" value="F:L-threonylcarbamoyladenylate synthase"/>
    <property type="evidence" value="ECO:0007669"/>
    <property type="project" value="UniProtKB-EC"/>
</dbReference>
<dbReference type="GO" id="GO:0000049">
    <property type="term" value="F:tRNA binding"/>
    <property type="evidence" value="ECO:0007669"/>
    <property type="project" value="TreeGrafter"/>
</dbReference>
<dbReference type="GO" id="GO:0006450">
    <property type="term" value="P:regulation of translational fidelity"/>
    <property type="evidence" value="ECO:0007669"/>
    <property type="project" value="TreeGrafter"/>
</dbReference>
<dbReference type="GO" id="GO:0002949">
    <property type="term" value="P:tRNA threonylcarbamoyladenosine modification"/>
    <property type="evidence" value="ECO:0007669"/>
    <property type="project" value="UniProtKB-UniRule"/>
</dbReference>
<dbReference type="FunFam" id="3.90.870.10:FF:000004">
    <property type="entry name" value="Threonylcarbamoyl-AMP synthase"/>
    <property type="match status" value="1"/>
</dbReference>
<dbReference type="Gene3D" id="3.90.870.10">
    <property type="entry name" value="DHBP synthase"/>
    <property type="match status" value="1"/>
</dbReference>
<dbReference type="HAMAP" id="MF_01852">
    <property type="entry name" value="TsaC"/>
    <property type="match status" value="1"/>
</dbReference>
<dbReference type="InterPro" id="IPR017945">
    <property type="entry name" value="DHBP_synth_RibB-like_a/b_dom"/>
</dbReference>
<dbReference type="InterPro" id="IPR006070">
    <property type="entry name" value="Sua5-like_dom"/>
</dbReference>
<dbReference type="InterPro" id="IPR023535">
    <property type="entry name" value="TC-AMP_synthase"/>
</dbReference>
<dbReference type="InterPro" id="IPR050156">
    <property type="entry name" value="TC-AMP_synthase_SUA5"/>
</dbReference>
<dbReference type="PANTHER" id="PTHR17490">
    <property type="entry name" value="SUA5"/>
    <property type="match status" value="1"/>
</dbReference>
<dbReference type="PANTHER" id="PTHR17490:SF18">
    <property type="entry name" value="THREONYLCARBAMOYL-AMP SYNTHASE"/>
    <property type="match status" value="1"/>
</dbReference>
<dbReference type="Pfam" id="PF01300">
    <property type="entry name" value="Sua5_yciO_yrdC"/>
    <property type="match status" value="1"/>
</dbReference>
<dbReference type="SUPFAM" id="SSF55821">
    <property type="entry name" value="YrdC/RibB"/>
    <property type="match status" value="1"/>
</dbReference>
<dbReference type="PROSITE" id="PS51163">
    <property type="entry name" value="YRDC"/>
    <property type="match status" value="1"/>
</dbReference>
<accession>B1J499</accession>
<feature type="chain" id="PRO_0000352958" description="Threonylcarbamoyl-AMP synthase">
    <location>
        <begin position="1"/>
        <end position="185"/>
    </location>
</feature>
<feature type="domain" description="YrdC-like" evidence="1">
    <location>
        <begin position="4"/>
        <end position="185"/>
    </location>
</feature>
<keyword id="KW-0067">ATP-binding</keyword>
<keyword id="KW-0963">Cytoplasm</keyword>
<keyword id="KW-0547">Nucleotide-binding</keyword>
<keyword id="KW-0548">Nucleotidyltransferase</keyword>
<keyword id="KW-0808">Transferase</keyword>
<keyword id="KW-0819">tRNA processing</keyword>
<gene>
    <name evidence="1" type="primary">tsaC</name>
    <name type="synonym">rimN</name>
    <name type="ordered locus">PputW619_0089</name>
</gene>
<sequence length="185" mass="20521">MVSSWRVQQAAREIRAGAVIAYPTEAVWGLGCDPWNEDAVYRLLALKSRPVDKGLILVADNIRQFDFLFEDFPEDWIDRMGSTWPGPNTWLVPHQDLLPEWVTGQHDTVALRVSDHPQVRELCALVGPLISTSCNPGGRPAAKSRLRVEQYFHGDLDMVLGGALGGRKNPSVIRNLATGEIVRPG</sequence>
<evidence type="ECO:0000255" key="1">
    <source>
        <dbReference type="HAMAP-Rule" id="MF_01852"/>
    </source>
</evidence>
<comment type="function">
    <text evidence="1">Required for the formation of a threonylcarbamoyl group on adenosine at position 37 (t(6)A37) in tRNAs that read codons beginning with adenine. Catalyzes the conversion of L-threonine, HCO(3)(-)/CO(2) and ATP to give threonylcarbamoyl-AMP (TC-AMP) as the acyladenylate intermediate, with the release of diphosphate.</text>
</comment>
<comment type="catalytic activity">
    <reaction evidence="1">
        <text>L-threonine + hydrogencarbonate + ATP = L-threonylcarbamoyladenylate + diphosphate + H2O</text>
        <dbReference type="Rhea" id="RHEA:36407"/>
        <dbReference type="ChEBI" id="CHEBI:15377"/>
        <dbReference type="ChEBI" id="CHEBI:17544"/>
        <dbReference type="ChEBI" id="CHEBI:30616"/>
        <dbReference type="ChEBI" id="CHEBI:33019"/>
        <dbReference type="ChEBI" id="CHEBI:57926"/>
        <dbReference type="ChEBI" id="CHEBI:73682"/>
        <dbReference type="EC" id="2.7.7.87"/>
    </reaction>
</comment>
<comment type="subcellular location">
    <subcellularLocation>
        <location evidence="1">Cytoplasm</location>
    </subcellularLocation>
</comment>
<comment type="similarity">
    <text evidence="1">Belongs to the SUA5 family. TsaC subfamily.</text>
</comment>
<protein>
    <recommendedName>
        <fullName evidence="1">Threonylcarbamoyl-AMP synthase</fullName>
        <shortName evidence="1">TC-AMP synthase</shortName>
        <ecNumber evidence="1">2.7.7.87</ecNumber>
    </recommendedName>
    <alternativeName>
        <fullName evidence="1">L-threonylcarbamoyladenylate synthase</fullName>
    </alternativeName>
    <alternativeName>
        <fullName evidence="1">t(6)A37 threonylcarbamoyladenosine biosynthesis protein TsaC</fullName>
    </alternativeName>
    <alternativeName>
        <fullName evidence="1">tRNA threonylcarbamoyladenosine biosynthesis protein TsaC</fullName>
    </alternativeName>
</protein>
<proteinExistence type="inferred from homology"/>
<organism>
    <name type="scientific">Pseudomonas putida (strain W619)</name>
    <dbReference type="NCBI Taxonomy" id="390235"/>
    <lineage>
        <taxon>Bacteria</taxon>
        <taxon>Pseudomonadati</taxon>
        <taxon>Pseudomonadota</taxon>
        <taxon>Gammaproteobacteria</taxon>
        <taxon>Pseudomonadales</taxon>
        <taxon>Pseudomonadaceae</taxon>
        <taxon>Pseudomonas</taxon>
    </lineage>
</organism>